<accession>B0T6E7</accession>
<protein>
    <recommendedName>
        <fullName evidence="1">Leucine--tRNA ligase</fullName>
        <ecNumber evidence="1">6.1.1.4</ecNumber>
    </recommendedName>
    <alternativeName>
        <fullName evidence="1">Leucyl-tRNA synthetase</fullName>
        <shortName evidence="1">LeuRS</shortName>
    </alternativeName>
</protein>
<feature type="chain" id="PRO_1000074827" description="Leucine--tRNA ligase">
    <location>
        <begin position="1"/>
        <end position="861"/>
    </location>
</feature>
<feature type="short sequence motif" description="'HIGH' region">
    <location>
        <begin position="42"/>
        <end position="52"/>
    </location>
</feature>
<feature type="short sequence motif" description="'KMSKS' region">
    <location>
        <begin position="623"/>
        <end position="627"/>
    </location>
</feature>
<feature type="binding site" evidence="1">
    <location>
        <position position="626"/>
    </location>
    <ligand>
        <name>ATP</name>
        <dbReference type="ChEBI" id="CHEBI:30616"/>
    </ligand>
</feature>
<sequence length="861" mass="94852">MARYNPKDTEPKWRAAWASANTFLTPITPDARPKYYVLEMFPYPSGRIHMGHVRNYAMGDVVARYKRAQGFNVLHPMGWDAFGMPAENAAMERGVHPKGWTYDNIAAMREQLKALGLSIDWSREFATCDPEYYGKQQAWFLHLLKRGLVYRKEASVNWDPVDMTVLANEQVIDGKGWRSGATVEKRKLTQWFLRITDYADALIDGLKTLDRWPEKVRIMQENWIGRSKGLRFTFKFDGEAPAGHADGLEVYTTRPDTLFGASFVGIAPEHPLAEQLAAADPAVAAFVAECRKGGTSEADIEGAEKLGRDTGLRVVHPLDPTLTLPVWIANFILMDYGTGAIFACPAHDQRDLDFARKYDLPVLPVVLPPGEDAATFQVGKEAYVGPGAIFNSEFLDGLDVEAAKTEAVNRIEAMDQGQGATVYRLRDWGVSRQRYWGCPIPVIHCEACGPVGVPEDQLPVVLPDDVAFDKPGNPLLRHPTWRHTTCPSCGGKAERETDTLDTFVDSSWYFARFTDPTAAEPISKAAADHWMPVDQYIGGVEHAVLHLLYARFITRALKDEGLVSVEEPFAGLFTQGMVTHEAYKNAAGEWVEPSDVVIAVEGATRSARHAATGEPITIGDIEKMSKSKKNVVAPEDIFEAYGVDAARLFVMSDSPPERDVQWTNSGVEGSWRFTHRVWNEFESQPAGDFAHDDSDAAAVALRKGAHRLIGFVTDSIEGFRFNSGVARLYEFLNMLKAAPAEGASQGVLAARAEALEILARLISPFTPHLAEEAWAHLGKAGMVVDAPWPKADAALAADDERVLPIQINGKRRGEIKVKAGTAEAEVEKIALADPAVLAHLEGLTVRKVIVVKDRIVNIVAG</sequence>
<dbReference type="EC" id="6.1.1.4" evidence="1"/>
<dbReference type="EMBL" id="CP000927">
    <property type="protein sequence ID" value="ABZ74150.1"/>
    <property type="molecule type" value="Genomic_DNA"/>
</dbReference>
<dbReference type="SMR" id="B0T6E7"/>
<dbReference type="STRING" id="366602.Caul_5030"/>
<dbReference type="KEGG" id="cak:Caul_5030"/>
<dbReference type="eggNOG" id="COG0495">
    <property type="taxonomic scope" value="Bacteria"/>
</dbReference>
<dbReference type="HOGENOM" id="CLU_004427_0_0_5"/>
<dbReference type="OrthoDB" id="9810365at2"/>
<dbReference type="GO" id="GO:0005829">
    <property type="term" value="C:cytosol"/>
    <property type="evidence" value="ECO:0007669"/>
    <property type="project" value="TreeGrafter"/>
</dbReference>
<dbReference type="GO" id="GO:0002161">
    <property type="term" value="F:aminoacyl-tRNA deacylase activity"/>
    <property type="evidence" value="ECO:0007669"/>
    <property type="project" value="InterPro"/>
</dbReference>
<dbReference type="GO" id="GO:0005524">
    <property type="term" value="F:ATP binding"/>
    <property type="evidence" value="ECO:0007669"/>
    <property type="project" value="UniProtKB-UniRule"/>
</dbReference>
<dbReference type="GO" id="GO:0004823">
    <property type="term" value="F:leucine-tRNA ligase activity"/>
    <property type="evidence" value="ECO:0007669"/>
    <property type="project" value="UniProtKB-UniRule"/>
</dbReference>
<dbReference type="GO" id="GO:0006429">
    <property type="term" value="P:leucyl-tRNA aminoacylation"/>
    <property type="evidence" value="ECO:0007669"/>
    <property type="project" value="UniProtKB-UniRule"/>
</dbReference>
<dbReference type="CDD" id="cd07958">
    <property type="entry name" value="Anticodon_Ia_Leu_BEm"/>
    <property type="match status" value="1"/>
</dbReference>
<dbReference type="CDD" id="cd00812">
    <property type="entry name" value="LeuRS_core"/>
    <property type="match status" value="1"/>
</dbReference>
<dbReference type="FunFam" id="1.10.730.10:FF:000002">
    <property type="entry name" value="Leucine--tRNA ligase"/>
    <property type="match status" value="1"/>
</dbReference>
<dbReference type="FunFam" id="3.40.50.620:FF:000003">
    <property type="entry name" value="Leucine--tRNA ligase"/>
    <property type="match status" value="1"/>
</dbReference>
<dbReference type="FunFam" id="3.40.50.620:FF:000056">
    <property type="entry name" value="Leucine--tRNA ligase"/>
    <property type="match status" value="1"/>
</dbReference>
<dbReference type="Gene3D" id="2.20.28.290">
    <property type="match status" value="1"/>
</dbReference>
<dbReference type="Gene3D" id="3.10.20.590">
    <property type="match status" value="1"/>
</dbReference>
<dbReference type="Gene3D" id="3.40.50.620">
    <property type="entry name" value="HUPs"/>
    <property type="match status" value="2"/>
</dbReference>
<dbReference type="Gene3D" id="1.10.730.10">
    <property type="entry name" value="Isoleucyl-tRNA Synthetase, Domain 1"/>
    <property type="match status" value="1"/>
</dbReference>
<dbReference type="Gene3D" id="3.90.740.10">
    <property type="entry name" value="Valyl/Leucyl/Isoleucyl-tRNA synthetase, editing domain"/>
    <property type="match status" value="1"/>
</dbReference>
<dbReference type="HAMAP" id="MF_00049_B">
    <property type="entry name" value="Leu_tRNA_synth_B"/>
    <property type="match status" value="1"/>
</dbReference>
<dbReference type="InterPro" id="IPR001412">
    <property type="entry name" value="aa-tRNA-synth_I_CS"/>
</dbReference>
<dbReference type="InterPro" id="IPR002300">
    <property type="entry name" value="aa-tRNA-synth_Ia"/>
</dbReference>
<dbReference type="InterPro" id="IPR002302">
    <property type="entry name" value="Leu-tRNA-ligase"/>
</dbReference>
<dbReference type="InterPro" id="IPR025709">
    <property type="entry name" value="Leu_tRNA-synth_edit"/>
</dbReference>
<dbReference type="InterPro" id="IPR013155">
    <property type="entry name" value="M/V/L/I-tRNA-synth_anticd-bd"/>
</dbReference>
<dbReference type="InterPro" id="IPR015413">
    <property type="entry name" value="Methionyl/Leucyl_tRNA_Synth"/>
</dbReference>
<dbReference type="InterPro" id="IPR014729">
    <property type="entry name" value="Rossmann-like_a/b/a_fold"/>
</dbReference>
<dbReference type="InterPro" id="IPR009080">
    <property type="entry name" value="tRNAsynth_Ia_anticodon-bd"/>
</dbReference>
<dbReference type="InterPro" id="IPR009008">
    <property type="entry name" value="Val/Leu/Ile-tRNA-synth_edit"/>
</dbReference>
<dbReference type="NCBIfam" id="TIGR00396">
    <property type="entry name" value="leuS_bact"/>
    <property type="match status" value="1"/>
</dbReference>
<dbReference type="PANTHER" id="PTHR43740:SF2">
    <property type="entry name" value="LEUCINE--TRNA LIGASE, MITOCHONDRIAL"/>
    <property type="match status" value="1"/>
</dbReference>
<dbReference type="PANTHER" id="PTHR43740">
    <property type="entry name" value="LEUCYL-TRNA SYNTHETASE"/>
    <property type="match status" value="1"/>
</dbReference>
<dbReference type="Pfam" id="PF08264">
    <property type="entry name" value="Anticodon_1"/>
    <property type="match status" value="1"/>
</dbReference>
<dbReference type="Pfam" id="PF00133">
    <property type="entry name" value="tRNA-synt_1"/>
    <property type="match status" value="2"/>
</dbReference>
<dbReference type="Pfam" id="PF13603">
    <property type="entry name" value="tRNA-synt_1_2"/>
    <property type="match status" value="1"/>
</dbReference>
<dbReference type="Pfam" id="PF09334">
    <property type="entry name" value="tRNA-synt_1g"/>
    <property type="match status" value="1"/>
</dbReference>
<dbReference type="PRINTS" id="PR00985">
    <property type="entry name" value="TRNASYNTHLEU"/>
</dbReference>
<dbReference type="SUPFAM" id="SSF47323">
    <property type="entry name" value="Anticodon-binding domain of a subclass of class I aminoacyl-tRNA synthetases"/>
    <property type="match status" value="1"/>
</dbReference>
<dbReference type="SUPFAM" id="SSF52374">
    <property type="entry name" value="Nucleotidylyl transferase"/>
    <property type="match status" value="1"/>
</dbReference>
<dbReference type="SUPFAM" id="SSF50677">
    <property type="entry name" value="ValRS/IleRS/LeuRS editing domain"/>
    <property type="match status" value="1"/>
</dbReference>
<dbReference type="PROSITE" id="PS00178">
    <property type="entry name" value="AA_TRNA_LIGASE_I"/>
    <property type="match status" value="1"/>
</dbReference>
<organism>
    <name type="scientific">Caulobacter sp. (strain K31)</name>
    <dbReference type="NCBI Taxonomy" id="366602"/>
    <lineage>
        <taxon>Bacteria</taxon>
        <taxon>Pseudomonadati</taxon>
        <taxon>Pseudomonadota</taxon>
        <taxon>Alphaproteobacteria</taxon>
        <taxon>Caulobacterales</taxon>
        <taxon>Caulobacteraceae</taxon>
        <taxon>Caulobacter</taxon>
    </lineage>
</organism>
<gene>
    <name evidence="1" type="primary">leuS</name>
    <name type="ordered locus">Caul_5030</name>
</gene>
<keyword id="KW-0030">Aminoacyl-tRNA synthetase</keyword>
<keyword id="KW-0067">ATP-binding</keyword>
<keyword id="KW-0963">Cytoplasm</keyword>
<keyword id="KW-0436">Ligase</keyword>
<keyword id="KW-0547">Nucleotide-binding</keyword>
<keyword id="KW-0648">Protein biosynthesis</keyword>
<evidence type="ECO:0000255" key="1">
    <source>
        <dbReference type="HAMAP-Rule" id="MF_00049"/>
    </source>
</evidence>
<comment type="catalytic activity">
    <reaction evidence="1">
        <text>tRNA(Leu) + L-leucine + ATP = L-leucyl-tRNA(Leu) + AMP + diphosphate</text>
        <dbReference type="Rhea" id="RHEA:11688"/>
        <dbReference type="Rhea" id="RHEA-COMP:9613"/>
        <dbReference type="Rhea" id="RHEA-COMP:9622"/>
        <dbReference type="ChEBI" id="CHEBI:30616"/>
        <dbReference type="ChEBI" id="CHEBI:33019"/>
        <dbReference type="ChEBI" id="CHEBI:57427"/>
        <dbReference type="ChEBI" id="CHEBI:78442"/>
        <dbReference type="ChEBI" id="CHEBI:78494"/>
        <dbReference type="ChEBI" id="CHEBI:456215"/>
        <dbReference type="EC" id="6.1.1.4"/>
    </reaction>
</comment>
<comment type="subcellular location">
    <subcellularLocation>
        <location evidence="1">Cytoplasm</location>
    </subcellularLocation>
</comment>
<comment type="similarity">
    <text evidence="1">Belongs to the class-I aminoacyl-tRNA synthetase family.</text>
</comment>
<reference key="1">
    <citation type="submission" date="2008-01" db="EMBL/GenBank/DDBJ databases">
        <title>Complete sequence of chromosome of Caulobacter sp. K31.</title>
        <authorList>
            <consortium name="US DOE Joint Genome Institute"/>
            <person name="Copeland A."/>
            <person name="Lucas S."/>
            <person name="Lapidus A."/>
            <person name="Barry K."/>
            <person name="Glavina del Rio T."/>
            <person name="Dalin E."/>
            <person name="Tice H."/>
            <person name="Pitluck S."/>
            <person name="Bruce D."/>
            <person name="Goodwin L."/>
            <person name="Thompson L.S."/>
            <person name="Brettin T."/>
            <person name="Detter J.C."/>
            <person name="Han C."/>
            <person name="Schmutz J."/>
            <person name="Larimer F."/>
            <person name="Land M."/>
            <person name="Hauser L."/>
            <person name="Kyrpides N."/>
            <person name="Kim E."/>
            <person name="Stephens C."/>
            <person name="Richardson P."/>
        </authorList>
    </citation>
    <scope>NUCLEOTIDE SEQUENCE [LARGE SCALE GENOMIC DNA]</scope>
    <source>
        <strain>K31</strain>
    </source>
</reference>
<proteinExistence type="inferred from homology"/>
<name>SYL_CAUSK</name>